<dbReference type="EMBL" id="AE005674">
    <property type="protein sequence ID" value="AAN43787.1"/>
    <property type="molecule type" value="Genomic_DNA"/>
</dbReference>
<dbReference type="EMBL" id="AE014073">
    <property type="protein sequence ID" value="AAP17604.1"/>
    <property type="molecule type" value="Genomic_DNA"/>
</dbReference>
<dbReference type="RefSeq" id="NP_708080.1">
    <property type="nucleotide sequence ID" value="NC_004337.2"/>
</dbReference>
<dbReference type="RefSeq" id="WP_000202798.1">
    <property type="nucleotide sequence ID" value="NZ_WPGW01000022.1"/>
</dbReference>
<dbReference type="SMR" id="P0AD23"/>
<dbReference type="STRING" id="198214.SF2268"/>
<dbReference type="PaxDb" id="198214-SF2268"/>
<dbReference type="GeneID" id="1025441"/>
<dbReference type="KEGG" id="sfl:SF2268"/>
<dbReference type="KEGG" id="sfx:S2397"/>
<dbReference type="PATRIC" id="fig|198214.7.peg.2717"/>
<dbReference type="HOGENOM" id="CLU_170187_0_0_6"/>
<dbReference type="Proteomes" id="UP000001006">
    <property type="component" value="Chromosome"/>
</dbReference>
<dbReference type="Proteomes" id="UP000002673">
    <property type="component" value="Chromosome"/>
</dbReference>
<dbReference type="InterPro" id="IPR020489">
    <property type="entry name" value="Uncharacterised_YejG"/>
</dbReference>
<dbReference type="NCBIfam" id="NF008811">
    <property type="entry name" value="PRK11835.1"/>
    <property type="match status" value="1"/>
</dbReference>
<dbReference type="Pfam" id="PF13989">
    <property type="entry name" value="YejG"/>
    <property type="match status" value="1"/>
</dbReference>
<proteinExistence type="predicted"/>
<reference key="1">
    <citation type="journal article" date="2002" name="Nucleic Acids Res.">
        <title>Genome sequence of Shigella flexneri 2a: insights into pathogenicity through comparison with genomes of Escherichia coli K12 and O157.</title>
        <authorList>
            <person name="Jin Q."/>
            <person name="Yuan Z."/>
            <person name="Xu J."/>
            <person name="Wang Y."/>
            <person name="Shen Y."/>
            <person name="Lu W."/>
            <person name="Wang J."/>
            <person name="Liu H."/>
            <person name="Yang J."/>
            <person name="Yang F."/>
            <person name="Zhang X."/>
            <person name="Zhang J."/>
            <person name="Yang G."/>
            <person name="Wu H."/>
            <person name="Qu D."/>
            <person name="Dong J."/>
            <person name="Sun L."/>
            <person name="Xue Y."/>
            <person name="Zhao A."/>
            <person name="Gao Y."/>
            <person name="Zhu J."/>
            <person name="Kan B."/>
            <person name="Ding K."/>
            <person name="Chen S."/>
            <person name="Cheng H."/>
            <person name="Yao Z."/>
            <person name="He B."/>
            <person name="Chen R."/>
            <person name="Ma D."/>
            <person name="Qiang B."/>
            <person name="Wen Y."/>
            <person name="Hou Y."/>
            <person name="Yu J."/>
        </authorList>
    </citation>
    <scope>NUCLEOTIDE SEQUENCE [LARGE SCALE GENOMIC DNA]</scope>
    <source>
        <strain>301 / Serotype 2a</strain>
    </source>
</reference>
<reference key="2">
    <citation type="journal article" date="2003" name="Infect. Immun.">
        <title>Complete genome sequence and comparative genomics of Shigella flexneri serotype 2a strain 2457T.</title>
        <authorList>
            <person name="Wei J."/>
            <person name="Goldberg M.B."/>
            <person name="Burland V."/>
            <person name="Venkatesan M.M."/>
            <person name="Deng W."/>
            <person name="Fournier G."/>
            <person name="Mayhew G.F."/>
            <person name="Plunkett G. III"/>
            <person name="Rose D.J."/>
            <person name="Darling A."/>
            <person name="Mau B."/>
            <person name="Perna N.T."/>
            <person name="Payne S.M."/>
            <person name="Runyen-Janecky L.J."/>
            <person name="Zhou S."/>
            <person name="Schwartz D.C."/>
            <person name="Blattner F.R."/>
        </authorList>
    </citation>
    <scope>NUCLEOTIDE SEQUENCE [LARGE SCALE GENOMIC DNA]</scope>
    <source>
        <strain>ATCC 700930 / 2457T / Serotype 2a</strain>
    </source>
</reference>
<protein>
    <recommendedName>
        <fullName>Uncharacterized protein YejG</fullName>
    </recommendedName>
</protein>
<sequence>MTSLQLSIVHRLPQNYRWSAGFAGSKVEPIPQNGPCGDNSLVALKLLSPDGDNAWSVMYKLSQALSDIEVPCSVLECEGEPCLFVNRQDEFAATCRLKNFGVAIAEPFSNYNPF</sequence>
<keyword id="KW-1185">Reference proteome</keyword>
<organism>
    <name type="scientific">Shigella flexneri</name>
    <dbReference type="NCBI Taxonomy" id="623"/>
    <lineage>
        <taxon>Bacteria</taxon>
        <taxon>Pseudomonadati</taxon>
        <taxon>Pseudomonadota</taxon>
        <taxon>Gammaproteobacteria</taxon>
        <taxon>Enterobacterales</taxon>
        <taxon>Enterobacteriaceae</taxon>
        <taxon>Shigella</taxon>
    </lineage>
</organism>
<feature type="chain" id="PRO_0000169163" description="Uncharacterized protein YejG">
    <location>
        <begin position="1"/>
        <end position="114"/>
    </location>
</feature>
<gene>
    <name type="primary">yejG</name>
    <name type="ordered locus">SF2268</name>
    <name type="ordered locus">S2397</name>
</gene>
<name>YEJG_SHIFL</name>
<accession>P0AD23</accession>
<accession>P33917</accession>